<keyword id="KW-0489">Methyltransferase</keyword>
<keyword id="KW-1185">Reference proteome</keyword>
<keyword id="KW-0949">S-adenosyl-L-methionine</keyword>
<keyword id="KW-0808">Transferase</keyword>
<keyword id="KW-0819">tRNA processing</keyword>
<reference key="1">
    <citation type="journal article" date="2007" name="J. Bacteriol.">
        <title>Genome sequence of Avery's virulent serotype 2 strain D39 of Streptococcus pneumoniae and comparison with that of unencapsulated laboratory strain R6.</title>
        <authorList>
            <person name="Lanie J.A."/>
            <person name="Ng W.-L."/>
            <person name="Kazmierczak K.M."/>
            <person name="Andrzejewski T.M."/>
            <person name="Davidsen T.M."/>
            <person name="Wayne K.J."/>
            <person name="Tettelin H."/>
            <person name="Glass J.I."/>
            <person name="Winkler M.E."/>
        </authorList>
    </citation>
    <scope>NUCLEOTIDE SEQUENCE [LARGE SCALE GENOMIC DNA]</scope>
    <source>
        <strain>D39 / NCTC 7466</strain>
    </source>
</reference>
<protein>
    <recommendedName>
        <fullName evidence="2">tRNA (guanine-N(7)-)-methyltransferase</fullName>
        <ecNumber evidence="2">2.1.1.33</ecNumber>
    </recommendedName>
    <alternativeName>
        <fullName evidence="2">tRNA (guanine(46)-N(7))-methyltransferase</fullName>
    </alternativeName>
    <alternativeName>
        <fullName evidence="2">tRNA(m7G46)-methyltransferase</fullName>
    </alternativeName>
</protein>
<proteinExistence type="inferred from homology"/>
<name>TRMB_STRP2</name>
<dbReference type="EC" id="2.1.1.33" evidence="2"/>
<dbReference type="EMBL" id="CP000410">
    <property type="protein sequence ID" value="ABJ53918.1"/>
    <property type="molecule type" value="Genomic_DNA"/>
</dbReference>
<dbReference type="RefSeq" id="WP_001266083.1">
    <property type="nucleotide sequence ID" value="NZ_JAMLJR010000001.1"/>
</dbReference>
<dbReference type="SMR" id="Q04LW5"/>
<dbReference type="PaxDb" id="373153-SPD_0477"/>
<dbReference type="GeneID" id="45654031"/>
<dbReference type="KEGG" id="spd:SPD_0477"/>
<dbReference type="eggNOG" id="COG0220">
    <property type="taxonomic scope" value="Bacteria"/>
</dbReference>
<dbReference type="HOGENOM" id="CLU_050910_2_1_9"/>
<dbReference type="BioCyc" id="SPNE373153:G1G6V-526-MONOMER"/>
<dbReference type="UniPathway" id="UPA00989"/>
<dbReference type="Proteomes" id="UP000001452">
    <property type="component" value="Chromosome"/>
</dbReference>
<dbReference type="GO" id="GO:0043527">
    <property type="term" value="C:tRNA methyltransferase complex"/>
    <property type="evidence" value="ECO:0007669"/>
    <property type="project" value="TreeGrafter"/>
</dbReference>
<dbReference type="GO" id="GO:0008176">
    <property type="term" value="F:tRNA (guanine(46)-N7)-methyltransferase activity"/>
    <property type="evidence" value="ECO:0007669"/>
    <property type="project" value="UniProtKB-UniRule"/>
</dbReference>
<dbReference type="CDD" id="cd02440">
    <property type="entry name" value="AdoMet_MTases"/>
    <property type="match status" value="1"/>
</dbReference>
<dbReference type="FunFam" id="3.40.50.150:FF:000035">
    <property type="entry name" value="tRNA (guanine-N(7)-)-methyltransferase"/>
    <property type="match status" value="1"/>
</dbReference>
<dbReference type="Gene3D" id="3.40.50.150">
    <property type="entry name" value="Vaccinia Virus protein VP39"/>
    <property type="match status" value="1"/>
</dbReference>
<dbReference type="HAMAP" id="MF_01057">
    <property type="entry name" value="tRNA_methyltr_TrmB"/>
    <property type="match status" value="1"/>
</dbReference>
<dbReference type="InterPro" id="IPR029063">
    <property type="entry name" value="SAM-dependent_MTases_sf"/>
</dbReference>
<dbReference type="InterPro" id="IPR003358">
    <property type="entry name" value="tRNA_(Gua-N-7)_MeTrfase_Trmb"/>
</dbReference>
<dbReference type="InterPro" id="IPR055361">
    <property type="entry name" value="tRNA_methyltr_TrmB_bact"/>
</dbReference>
<dbReference type="NCBIfam" id="NF001080">
    <property type="entry name" value="PRK00121.2-2"/>
    <property type="match status" value="1"/>
</dbReference>
<dbReference type="NCBIfam" id="TIGR00091">
    <property type="entry name" value="tRNA (guanosine(46)-N7)-methyltransferase TrmB"/>
    <property type="match status" value="1"/>
</dbReference>
<dbReference type="PANTHER" id="PTHR23417">
    <property type="entry name" value="3-DEOXY-D-MANNO-OCTULOSONIC-ACID TRANSFERASE/TRNA GUANINE-N 7 - -METHYLTRANSFERASE"/>
    <property type="match status" value="1"/>
</dbReference>
<dbReference type="PANTHER" id="PTHR23417:SF14">
    <property type="entry name" value="PENTACOTRIPEPTIDE-REPEAT REGION OF PRORP DOMAIN-CONTAINING PROTEIN"/>
    <property type="match status" value="1"/>
</dbReference>
<dbReference type="Pfam" id="PF02390">
    <property type="entry name" value="Methyltransf_4"/>
    <property type="match status" value="1"/>
</dbReference>
<dbReference type="SUPFAM" id="SSF53335">
    <property type="entry name" value="S-adenosyl-L-methionine-dependent methyltransferases"/>
    <property type="match status" value="1"/>
</dbReference>
<dbReference type="PROSITE" id="PS51625">
    <property type="entry name" value="SAM_MT_TRMB"/>
    <property type="match status" value="1"/>
</dbReference>
<sequence length="211" mass="24379">MRVRNRKGATELLEANPQYVVLNPLEAKAKWRDLFGNDNPIHVEVGSGKGAFVSGMAKQNPDINYIGIDIQKSVLSYALDKVLEVGVPNIKLLWVDGSDLTDYFEDGEIDRLYLNFSDPWPKKRHEKRRLTYKTFLDTFKRILPENGEIHFKTDNRGLFEYSLVSFSQYGMKLNGVWLDLHASDFEGNVMTEYEQKFSNKGQVIYRVEAEF</sequence>
<gene>
    <name evidence="2" type="primary">trmB</name>
    <name type="ordered locus">SPD_0477</name>
</gene>
<comment type="function">
    <text evidence="2">Catalyzes the formation of N(7)-methylguanine at position 46 (m7G46) in tRNA.</text>
</comment>
<comment type="catalytic activity">
    <reaction evidence="2">
        <text>guanosine(46) in tRNA + S-adenosyl-L-methionine = N(7)-methylguanosine(46) in tRNA + S-adenosyl-L-homocysteine</text>
        <dbReference type="Rhea" id="RHEA:42708"/>
        <dbReference type="Rhea" id="RHEA-COMP:10188"/>
        <dbReference type="Rhea" id="RHEA-COMP:10189"/>
        <dbReference type="ChEBI" id="CHEBI:57856"/>
        <dbReference type="ChEBI" id="CHEBI:59789"/>
        <dbReference type="ChEBI" id="CHEBI:74269"/>
        <dbReference type="ChEBI" id="CHEBI:74480"/>
        <dbReference type="EC" id="2.1.1.33"/>
    </reaction>
</comment>
<comment type="pathway">
    <text evidence="2">tRNA modification; N(7)-methylguanine-tRNA biosynthesis.</text>
</comment>
<comment type="similarity">
    <text evidence="2">Belongs to the class I-like SAM-binding methyltransferase superfamily. TrmB family.</text>
</comment>
<organism>
    <name type="scientific">Streptococcus pneumoniae serotype 2 (strain D39 / NCTC 7466)</name>
    <dbReference type="NCBI Taxonomy" id="373153"/>
    <lineage>
        <taxon>Bacteria</taxon>
        <taxon>Bacillati</taxon>
        <taxon>Bacillota</taxon>
        <taxon>Bacilli</taxon>
        <taxon>Lactobacillales</taxon>
        <taxon>Streptococcaceae</taxon>
        <taxon>Streptococcus</taxon>
    </lineage>
</organism>
<feature type="chain" id="PRO_0000288234" description="tRNA (guanine-N(7)-)-methyltransferase">
    <location>
        <begin position="1"/>
        <end position="211"/>
    </location>
</feature>
<feature type="region of interest" description="Interaction with RNA" evidence="2">
    <location>
        <begin position="124"/>
        <end position="129"/>
    </location>
</feature>
<feature type="active site" evidence="1">
    <location>
        <position position="118"/>
    </location>
</feature>
<feature type="binding site" evidence="2">
    <location>
        <position position="44"/>
    </location>
    <ligand>
        <name>S-adenosyl-L-methionine</name>
        <dbReference type="ChEBI" id="CHEBI:59789"/>
    </ligand>
</feature>
<feature type="binding site" evidence="2">
    <location>
        <position position="69"/>
    </location>
    <ligand>
        <name>S-adenosyl-L-methionine</name>
        <dbReference type="ChEBI" id="CHEBI:59789"/>
    </ligand>
</feature>
<feature type="binding site" evidence="2">
    <location>
        <position position="96"/>
    </location>
    <ligand>
        <name>S-adenosyl-L-methionine</name>
        <dbReference type="ChEBI" id="CHEBI:59789"/>
    </ligand>
</feature>
<feature type="binding site" evidence="2">
    <location>
        <position position="118"/>
    </location>
    <ligand>
        <name>S-adenosyl-L-methionine</name>
        <dbReference type="ChEBI" id="CHEBI:59789"/>
    </ligand>
</feature>
<feature type="binding site" evidence="2">
    <location>
        <position position="122"/>
    </location>
    <ligand>
        <name>substrate</name>
    </ligand>
</feature>
<feature type="binding site" evidence="2">
    <location>
        <position position="154"/>
    </location>
    <ligand>
        <name>substrate</name>
    </ligand>
</feature>
<feature type="binding site" evidence="2">
    <location>
        <begin position="191"/>
        <end position="194"/>
    </location>
    <ligand>
        <name>substrate</name>
    </ligand>
</feature>
<accession>Q04LW5</accession>
<evidence type="ECO:0000250" key="1"/>
<evidence type="ECO:0000255" key="2">
    <source>
        <dbReference type="HAMAP-Rule" id="MF_01057"/>
    </source>
</evidence>